<name>DUS_MYCLE</name>
<organism>
    <name type="scientific">Mycobacterium leprae (strain TN)</name>
    <dbReference type="NCBI Taxonomy" id="272631"/>
    <lineage>
        <taxon>Bacteria</taxon>
        <taxon>Bacillati</taxon>
        <taxon>Actinomycetota</taxon>
        <taxon>Actinomycetes</taxon>
        <taxon>Mycobacteriales</taxon>
        <taxon>Mycobacteriaceae</taxon>
        <taxon>Mycobacterium</taxon>
    </lineage>
</organism>
<gene>
    <name type="primary">dus</name>
    <name type="ordered locus">ML2186</name>
</gene>
<evidence type="ECO:0000250" key="1">
    <source>
        <dbReference type="UniProtKB" id="P33371"/>
    </source>
</evidence>
<evidence type="ECO:0000250" key="2">
    <source>
        <dbReference type="UniProtKB" id="Q5SMC7"/>
    </source>
</evidence>
<evidence type="ECO:0000305" key="3"/>
<proteinExistence type="inferred from homology"/>
<dbReference type="EC" id="1.3.1.-"/>
<dbReference type="EMBL" id="U15182">
    <property type="protein sequence ID" value="AAA62994.1"/>
    <property type="molecule type" value="Genomic_DNA"/>
</dbReference>
<dbReference type="EMBL" id="AL583924">
    <property type="protein sequence ID" value="CAC31141.1"/>
    <property type="molecule type" value="Genomic_DNA"/>
</dbReference>
<dbReference type="PIR" id="E87182">
    <property type="entry name" value="E87182"/>
</dbReference>
<dbReference type="RefSeq" id="NP_302432.1">
    <property type="nucleotide sequence ID" value="NC_002677.1"/>
</dbReference>
<dbReference type="SMR" id="Q50049"/>
<dbReference type="STRING" id="272631.gene:17576043"/>
<dbReference type="KEGG" id="mle:ML2186"/>
<dbReference type="PATRIC" id="fig|272631.5.peg.4145"/>
<dbReference type="Leproma" id="ML2186"/>
<dbReference type="eggNOG" id="COG0042">
    <property type="taxonomic scope" value="Bacteria"/>
</dbReference>
<dbReference type="HOGENOM" id="CLU_013299_0_0_11"/>
<dbReference type="OrthoDB" id="9764501at2"/>
<dbReference type="Proteomes" id="UP000000806">
    <property type="component" value="Chromosome"/>
</dbReference>
<dbReference type="GO" id="GO:0050660">
    <property type="term" value="F:flavin adenine dinucleotide binding"/>
    <property type="evidence" value="ECO:0007669"/>
    <property type="project" value="InterPro"/>
</dbReference>
<dbReference type="GO" id="GO:0000049">
    <property type="term" value="F:tRNA binding"/>
    <property type="evidence" value="ECO:0007669"/>
    <property type="project" value="UniProtKB-KW"/>
</dbReference>
<dbReference type="GO" id="GO:0017150">
    <property type="term" value="F:tRNA dihydrouridine synthase activity"/>
    <property type="evidence" value="ECO:0007669"/>
    <property type="project" value="InterPro"/>
</dbReference>
<dbReference type="CDD" id="cd02801">
    <property type="entry name" value="DUS_like_FMN"/>
    <property type="match status" value="1"/>
</dbReference>
<dbReference type="FunFam" id="1.10.1200.80:FF:000003">
    <property type="entry name" value="tRNA-dihydrouridine synthase"/>
    <property type="match status" value="1"/>
</dbReference>
<dbReference type="Gene3D" id="3.20.20.70">
    <property type="entry name" value="Aldolase class I"/>
    <property type="match status" value="1"/>
</dbReference>
<dbReference type="Gene3D" id="1.10.1200.80">
    <property type="entry name" value="Putative flavin oxidoreducatase, domain 2"/>
    <property type="match status" value="1"/>
</dbReference>
<dbReference type="InterPro" id="IPR013785">
    <property type="entry name" value="Aldolase_TIM"/>
</dbReference>
<dbReference type="InterPro" id="IPR035587">
    <property type="entry name" value="DUS-like_FMN-bd"/>
</dbReference>
<dbReference type="InterPro" id="IPR001269">
    <property type="entry name" value="DUS_fam"/>
</dbReference>
<dbReference type="InterPro" id="IPR004652">
    <property type="entry name" value="DusB-like"/>
</dbReference>
<dbReference type="InterPro" id="IPR024036">
    <property type="entry name" value="tRNA-dHydroUridine_Synthase_C"/>
</dbReference>
<dbReference type="InterPro" id="IPR018517">
    <property type="entry name" value="tRNA_hU_synthase_CS"/>
</dbReference>
<dbReference type="NCBIfam" id="TIGR00737">
    <property type="entry name" value="nifR3_yhdG"/>
    <property type="match status" value="1"/>
</dbReference>
<dbReference type="PANTHER" id="PTHR45846">
    <property type="entry name" value="TRNA-DIHYDROURIDINE(47) SYNTHASE [NAD(P)(+)]-LIKE"/>
    <property type="match status" value="1"/>
</dbReference>
<dbReference type="PANTHER" id="PTHR45846:SF1">
    <property type="entry name" value="TRNA-DIHYDROURIDINE(47) SYNTHASE [NAD(P)(+)]-LIKE"/>
    <property type="match status" value="1"/>
</dbReference>
<dbReference type="Pfam" id="PF01207">
    <property type="entry name" value="Dus"/>
    <property type="match status" value="1"/>
</dbReference>
<dbReference type="PIRSF" id="PIRSF006621">
    <property type="entry name" value="Dus"/>
    <property type="match status" value="1"/>
</dbReference>
<dbReference type="SUPFAM" id="SSF51395">
    <property type="entry name" value="FMN-linked oxidoreductases"/>
    <property type="match status" value="1"/>
</dbReference>
<dbReference type="PROSITE" id="PS01136">
    <property type="entry name" value="UPF0034"/>
    <property type="match status" value="1"/>
</dbReference>
<sequence length="384" mass="41100">MLAPMAGVTNVTFRTLCREFGSTRGNLLRPAPPHLRSPLEQSQVGTISGLYVCEMVTARALVERNAVTIHMTTFAPDESPRSLQLYTVDPATTYTAAKMVADEGLADHIDMNFGCPMPKVTRRGGGAALPYKRRLFGQIVAAAVRATEGTKIPVTVKFRIGIDDEHHTHLDAGRIAEAEGAAAVALHARTAAQRYSGTADWAQIAQLKQQVRTIPVLGNGDIYDASDALAMMAVTGCDGVVIGRGCLGRPWLFAELSAAFTGRPAPAPPTLGEVAEIVRRHGKLLVAHFGEDKGMRDIRKHIAWYLHGFPAGSELRNALALVKTLDELDCLLNRLDGAVPFPDAAIGPRGRQGSPAWVALPDSWLTDPDDCTVPIGADIMESGG</sequence>
<keyword id="KW-0285">Flavoprotein</keyword>
<keyword id="KW-0288">FMN</keyword>
<keyword id="KW-0521">NADP</keyword>
<keyword id="KW-0560">Oxidoreductase</keyword>
<keyword id="KW-1185">Reference proteome</keyword>
<keyword id="KW-0694">RNA-binding</keyword>
<keyword id="KW-0819">tRNA processing</keyword>
<keyword id="KW-0820">tRNA-binding</keyword>
<accession>Q50049</accession>
<comment type="function">
    <text evidence="1">Catalyzes the synthesis of 5,6-dihydrouridine (D), a modified base found in the D-loop of most tRNAs, via the reduction of the C5-C6 double bond in target uridines.</text>
</comment>
<comment type="catalytic activity">
    <reaction evidence="1">
        <text>a 5,6-dihydrouridine in tRNA + NAD(+) = a uridine in tRNA + NADH + H(+)</text>
        <dbReference type="Rhea" id="RHEA:54452"/>
        <dbReference type="Rhea" id="RHEA-COMP:13339"/>
        <dbReference type="Rhea" id="RHEA-COMP:13887"/>
        <dbReference type="ChEBI" id="CHEBI:15378"/>
        <dbReference type="ChEBI" id="CHEBI:57540"/>
        <dbReference type="ChEBI" id="CHEBI:57945"/>
        <dbReference type="ChEBI" id="CHEBI:65315"/>
        <dbReference type="ChEBI" id="CHEBI:74443"/>
    </reaction>
</comment>
<comment type="catalytic activity">
    <reaction evidence="1">
        <text>a 5,6-dihydrouridine in tRNA + NADP(+) = a uridine in tRNA + NADPH + H(+)</text>
        <dbReference type="Rhea" id="RHEA:23624"/>
        <dbReference type="Rhea" id="RHEA-COMP:13339"/>
        <dbReference type="Rhea" id="RHEA-COMP:13887"/>
        <dbReference type="ChEBI" id="CHEBI:15378"/>
        <dbReference type="ChEBI" id="CHEBI:57783"/>
        <dbReference type="ChEBI" id="CHEBI:58349"/>
        <dbReference type="ChEBI" id="CHEBI:65315"/>
        <dbReference type="ChEBI" id="CHEBI:74443"/>
    </reaction>
</comment>
<comment type="cofactor">
    <cofactor evidence="1">
        <name>FMN</name>
        <dbReference type="ChEBI" id="CHEBI:58210"/>
    </cofactor>
</comment>
<comment type="similarity">
    <text evidence="3">Belongs to the Dus family.</text>
</comment>
<feature type="chain" id="PRO_0000162136" description="Probable tRNA-dihydrouridine synthase">
    <location>
        <begin position="1"/>
        <end position="384"/>
    </location>
</feature>
<feature type="active site" description="Proton donor" evidence="2">
    <location>
        <position position="115"/>
    </location>
</feature>
<feature type="binding site" evidence="1">
    <location>
        <begin position="4"/>
        <end position="6"/>
    </location>
    <ligand>
        <name>FMN</name>
        <dbReference type="ChEBI" id="CHEBI:58210"/>
    </ligand>
</feature>
<feature type="binding site" evidence="1">
    <location>
        <position position="84"/>
    </location>
    <ligand>
        <name>FMN</name>
        <dbReference type="ChEBI" id="CHEBI:58210"/>
    </ligand>
</feature>
<feature type="binding site" evidence="1">
    <location>
        <position position="157"/>
    </location>
    <ligand>
        <name>FMN</name>
        <dbReference type="ChEBI" id="CHEBI:58210"/>
    </ligand>
</feature>
<feature type="binding site" evidence="1">
    <location>
        <begin position="219"/>
        <end position="221"/>
    </location>
    <ligand>
        <name>FMN</name>
        <dbReference type="ChEBI" id="CHEBI:58210"/>
    </ligand>
</feature>
<feature type="binding site" evidence="1">
    <location>
        <begin position="243"/>
        <end position="244"/>
    </location>
    <ligand>
        <name>FMN</name>
        <dbReference type="ChEBI" id="CHEBI:58210"/>
    </ligand>
</feature>
<protein>
    <recommendedName>
        <fullName>Probable tRNA-dihydrouridine synthase</fullName>
        <ecNumber>1.3.1.-</ecNumber>
    </recommendedName>
</protein>
<reference key="1">
    <citation type="submission" date="1995-04" db="EMBL/GenBank/DDBJ databases">
        <authorList>
            <person name="Smith D.R."/>
            <person name="Robison K."/>
        </authorList>
    </citation>
    <scope>NUCLEOTIDE SEQUENCE [GENOMIC DNA]</scope>
</reference>
<reference key="2">
    <citation type="journal article" date="2001" name="Nature">
        <title>Massive gene decay in the leprosy bacillus.</title>
        <authorList>
            <person name="Cole S.T."/>
            <person name="Eiglmeier K."/>
            <person name="Parkhill J."/>
            <person name="James K.D."/>
            <person name="Thomson N.R."/>
            <person name="Wheeler P.R."/>
            <person name="Honore N."/>
            <person name="Garnier T."/>
            <person name="Churcher C.M."/>
            <person name="Harris D.E."/>
            <person name="Mungall K.L."/>
            <person name="Basham D."/>
            <person name="Brown D."/>
            <person name="Chillingworth T."/>
            <person name="Connor R."/>
            <person name="Davies R.M."/>
            <person name="Devlin K."/>
            <person name="Duthoy S."/>
            <person name="Feltwell T."/>
            <person name="Fraser A."/>
            <person name="Hamlin N."/>
            <person name="Holroyd S."/>
            <person name="Hornsby T."/>
            <person name="Jagels K."/>
            <person name="Lacroix C."/>
            <person name="Maclean J."/>
            <person name="Moule S."/>
            <person name="Murphy L.D."/>
            <person name="Oliver K."/>
            <person name="Quail M.A."/>
            <person name="Rajandream M.A."/>
            <person name="Rutherford K.M."/>
            <person name="Rutter S."/>
            <person name="Seeger K."/>
            <person name="Simon S."/>
            <person name="Simmonds M."/>
            <person name="Skelton J."/>
            <person name="Squares R."/>
            <person name="Squares S."/>
            <person name="Stevens K."/>
            <person name="Taylor K."/>
            <person name="Whitehead S."/>
            <person name="Woodward J.R."/>
            <person name="Barrell B.G."/>
        </authorList>
    </citation>
    <scope>NUCLEOTIDE SEQUENCE [LARGE SCALE GENOMIC DNA]</scope>
    <source>
        <strain>TN</strain>
    </source>
</reference>